<keyword id="KW-0479">Metal-binding</keyword>
<keyword id="KW-0687">Ribonucleoprotein</keyword>
<keyword id="KW-0689">Ribosomal protein</keyword>
<keyword id="KW-0694">RNA-binding</keyword>
<keyword id="KW-0699">rRNA-binding</keyword>
<keyword id="KW-0862">Zinc</keyword>
<comment type="function">
    <text evidence="1">Binds the 23S rRNA.</text>
</comment>
<comment type="cofactor">
    <cofactor evidence="1">
        <name>Zn(2+)</name>
        <dbReference type="ChEBI" id="CHEBI:29105"/>
    </cofactor>
    <text evidence="1">Binds 1 zinc ion per subunit.</text>
</comment>
<comment type="subunit">
    <text evidence="1">Part of the 50S ribosomal subunit.</text>
</comment>
<comment type="similarity">
    <text evidence="1">Belongs to the bacterial ribosomal protein bL31 family. Type A subfamily.</text>
</comment>
<sequence>MRADIHPKYEKLVATCSCGNVIETRSALGKETIYLDVCSACHPFYTGKQKNVDTGGRIDKFKQRFAGMSRSIKR</sequence>
<proteinExistence type="inferred from homology"/>
<gene>
    <name evidence="1" type="primary">rpmE</name>
    <name type="ordered locus">AB57_2853</name>
</gene>
<organism>
    <name type="scientific">Acinetobacter baumannii (strain AB0057)</name>
    <dbReference type="NCBI Taxonomy" id="480119"/>
    <lineage>
        <taxon>Bacteria</taxon>
        <taxon>Pseudomonadati</taxon>
        <taxon>Pseudomonadota</taxon>
        <taxon>Gammaproteobacteria</taxon>
        <taxon>Moraxellales</taxon>
        <taxon>Moraxellaceae</taxon>
        <taxon>Acinetobacter</taxon>
        <taxon>Acinetobacter calcoaceticus/baumannii complex</taxon>
    </lineage>
</organism>
<dbReference type="EMBL" id="CP001182">
    <property type="protein sequence ID" value="ACJ42201.1"/>
    <property type="molecule type" value="Genomic_DNA"/>
</dbReference>
<dbReference type="RefSeq" id="WP_001200845.1">
    <property type="nucleotide sequence ID" value="NC_011586.2"/>
</dbReference>
<dbReference type="SMR" id="B7I4A2"/>
<dbReference type="GeneID" id="92894731"/>
<dbReference type="KEGG" id="abn:AB57_2853"/>
<dbReference type="HOGENOM" id="CLU_114306_4_3_6"/>
<dbReference type="Proteomes" id="UP000007094">
    <property type="component" value="Chromosome"/>
</dbReference>
<dbReference type="GO" id="GO:1990904">
    <property type="term" value="C:ribonucleoprotein complex"/>
    <property type="evidence" value="ECO:0007669"/>
    <property type="project" value="UniProtKB-KW"/>
</dbReference>
<dbReference type="GO" id="GO:0005840">
    <property type="term" value="C:ribosome"/>
    <property type="evidence" value="ECO:0007669"/>
    <property type="project" value="UniProtKB-KW"/>
</dbReference>
<dbReference type="GO" id="GO:0046872">
    <property type="term" value="F:metal ion binding"/>
    <property type="evidence" value="ECO:0007669"/>
    <property type="project" value="UniProtKB-KW"/>
</dbReference>
<dbReference type="GO" id="GO:0019843">
    <property type="term" value="F:rRNA binding"/>
    <property type="evidence" value="ECO:0007669"/>
    <property type="project" value="UniProtKB-KW"/>
</dbReference>
<dbReference type="GO" id="GO:0003735">
    <property type="term" value="F:structural constituent of ribosome"/>
    <property type="evidence" value="ECO:0007669"/>
    <property type="project" value="InterPro"/>
</dbReference>
<dbReference type="GO" id="GO:0006412">
    <property type="term" value="P:translation"/>
    <property type="evidence" value="ECO:0007669"/>
    <property type="project" value="UniProtKB-UniRule"/>
</dbReference>
<dbReference type="Gene3D" id="4.10.830.30">
    <property type="entry name" value="Ribosomal protein L31"/>
    <property type="match status" value="1"/>
</dbReference>
<dbReference type="HAMAP" id="MF_00501">
    <property type="entry name" value="Ribosomal_bL31_1"/>
    <property type="match status" value="1"/>
</dbReference>
<dbReference type="InterPro" id="IPR034704">
    <property type="entry name" value="Ribosomal_bL28/bL31-like_sf"/>
</dbReference>
<dbReference type="InterPro" id="IPR002150">
    <property type="entry name" value="Ribosomal_bL31"/>
</dbReference>
<dbReference type="InterPro" id="IPR027491">
    <property type="entry name" value="Ribosomal_bL31_A"/>
</dbReference>
<dbReference type="InterPro" id="IPR042105">
    <property type="entry name" value="Ribosomal_bL31_sf"/>
</dbReference>
<dbReference type="NCBIfam" id="TIGR00105">
    <property type="entry name" value="L31"/>
    <property type="match status" value="1"/>
</dbReference>
<dbReference type="NCBIfam" id="NF000612">
    <property type="entry name" value="PRK00019.1"/>
    <property type="match status" value="1"/>
</dbReference>
<dbReference type="NCBIfam" id="NF001809">
    <property type="entry name" value="PRK00528.1"/>
    <property type="match status" value="1"/>
</dbReference>
<dbReference type="PANTHER" id="PTHR33280">
    <property type="entry name" value="50S RIBOSOMAL PROTEIN L31, CHLOROPLASTIC"/>
    <property type="match status" value="1"/>
</dbReference>
<dbReference type="PANTHER" id="PTHR33280:SF6">
    <property type="entry name" value="LARGE RIBOSOMAL SUBUNIT PROTEIN BL31A"/>
    <property type="match status" value="1"/>
</dbReference>
<dbReference type="Pfam" id="PF01197">
    <property type="entry name" value="Ribosomal_L31"/>
    <property type="match status" value="1"/>
</dbReference>
<dbReference type="PRINTS" id="PR01249">
    <property type="entry name" value="RIBOSOMALL31"/>
</dbReference>
<dbReference type="SUPFAM" id="SSF143800">
    <property type="entry name" value="L28p-like"/>
    <property type="match status" value="1"/>
</dbReference>
<dbReference type="PROSITE" id="PS01143">
    <property type="entry name" value="RIBOSOMAL_L31"/>
    <property type="match status" value="1"/>
</dbReference>
<reference key="1">
    <citation type="journal article" date="2008" name="J. Bacteriol.">
        <title>Comparative genome sequence analysis of multidrug-resistant Acinetobacter baumannii.</title>
        <authorList>
            <person name="Adams M.D."/>
            <person name="Goglin K."/>
            <person name="Molyneaux N."/>
            <person name="Hujer K.M."/>
            <person name="Lavender H."/>
            <person name="Jamison J.J."/>
            <person name="MacDonald I.J."/>
            <person name="Martin K.M."/>
            <person name="Russo T."/>
            <person name="Campagnari A.A."/>
            <person name="Hujer A.M."/>
            <person name="Bonomo R.A."/>
            <person name="Gill S.R."/>
        </authorList>
    </citation>
    <scope>NUCLEOTIDE SEQUENCE [LARGE SCALE GENOMIC DNA]</scope>
    <source>
        <strain>AB0057</strain>
    </source>
</reference>
<protein>
    <recommendedName>
        <fullName evidence="1">Large ribosomal subunit protein bL31</fullName>
    </recommendedName>
    <alternativeName>
        <fullName evidence="2">50S ribosomal protein L31</fullName>
    </alternativeName>
</protein>
<name>RL31_ACIB5</name>
<feature type="chain" id="PRO_1000126542" description="Large ribosomal subunit protein bL31">
    <location>
        <begin position="1"/>
        <end position="74"/>
    </location>
</feature>
<feature type="binding site" evidence="1">
    <location>
        <position position="16"/>
    </location>
    <ligand>
        <name>Zn(2+)</name>
        <dbReference type="ChEBI" id="CHEBI:29105"/>
    </ligand>
</feature>
<feature type="binding site" evidence="1">
    <location>
        <position position="18"/>
    </location>
    <ligand>
        <name>Zn(2+)</name>
        <dbReference type="ChEBI" id="CHEBI:29105"/>
    </ligand>
</feature>
<feature type="binding site" evidence="1">
    <location>
        <position position="38"/>
    </location>
    <ligand>
        <name>Zn(2+)</name>
        <dbReference type="ChEBI" id="CHEBI:29105"/>
    </ligand>
</feature>
<feature type="binding site" evidence="1">
    <location>
        <position position="41"/>
    </location>
    <ligand>
        <name>Zn(2+)</name>
        <dbReference type="ChEBI" id="CHEBI:29105"/>
    </ligand>
</feature>
<accession>B7I4A2</accession>
<evidence type="ECO:0000255" key="1">
    <source>
        <dbReference type="HAMAP-Rule" id="MF_00501"/>
    </source>
</evidence>
<evidence type="ECO:0000305" key="2"/>